<comment type="function">
    <text evidence="2">As cone-specific cGMP phosphodiesterase, it plays an essential role in light detection and cone phototransduction by rapidly decreasing intracellular levels of cGMP.</text>
</comment>
<comment type="catalytic activity">
    <reaction evidence="2">
        <text>3',5'-cyclic GMP + H2O = GMP + H(+)</text>
        <dbReference type="Rhea" id="RHEA:16957"/>
        <dbReference type="ChEBI" id="CHEBI:15377"/>
        <dbReference type="ChEBI" id="CHEBI:15378"/>
        <dbReference type="ChEBI" id="CHEBI:57746"/>
        <dbReference type="ChEBI" id="CHEBI:58115"/>
        <dbReference type="EC" id="3.1.4.35"/>
    </reaction>
</comment>
<comment type="cofactor">
    <cofactor evidence="1">
        <name>a divalent metal cation</name>
        <dbReference type="ChEBI" id="CHEBI:60240"/>
    </cofactor>
    <text evidence="1">Binds 2 divalent metal cations per subunit. Site 1 may preferentially bind zinc ions, while site 2 has a preference for magnesium and/or manganese ions.</text>
</comment>
<comment type="subunit">
    <text evidence="1">Composed of two alpha' subunits that are associated with 3 smaller proteins of 11, 13, and 15 kDa.</text>
</comment>
<comment type="subcellular location">
    <subcellularLocation>
        <location evidence="7">Cell membrane</location>
        <topology evidence="7">Lipid-anchor</topology>
        <orientation evidence="7">Cytoplasmic side</orientation>
    </subcellularLocation>
</comment>
<comment type="alternative products">
    <event type="alternative splicing"/>
    <isoform>
        <id>Q91ZQ1-1</id>
        <name>1</name>
        <sequence type="displayed"/>
    </isoform>
    <isoform>
        <id>Q91ZQ1-2</id>
        <name>2</name>
        <sequence type="described" ref="VSP_017422"/>
    </isoform>
</comment>
<comment type="similarity">
    <text evidence="7">Belongs to the cyclic nucleotide phosphodiesterase family.</text>
</comment>
<organism>
    <name type="scientific">Mus musculus</name>
    <name type="common">Mouse</name>
    <dbReference type="NCBI Taxonomy" id="10090"/>
    <lineage>
        <taxon>Eukaryota</taxon>
        <taxon>Metazoa</taxon>
        <taxon>Chordata</taxon>
        <taxon>Craniata</taxon>
        <taxon>Vertebrata</taxon>
        <taxon>Euteleostomi</taxon>
        <taxon>Mammalia</taxon>
        <taxon>Eutheria</taxon>
        <taxon>Euarchontoglires</taxon>
        <taxon>Glires</taxon>
        <taxon>Rodentia</taxon>
        <taxon>Myomorpha</taxon>
        <taxon>Muroidea</taxon>
        <taxon>Muridae</taxon>
        <taxon>Murinae</taxon>
        <taxon>Mus</taxon>
        <taxon>Mus</taxon>
    </lineage>
</organism>
<feature type="chain" id="PRO_0000226068" description="Cone cGMP-specific 3',5'-cyclic phosphodiesterase subunit alpha'">
    <location>
        <begin position="1"/>
        <end position="858"/>
    </location>
</feature>
<feature type="propeptide" id="PRO_0000370789" description="Removed in mature form" evidence="3">
    <location>
        <begin position="859"/>
        <end position="861"/>
    </location>
</feature>
<feature type="domain" description="GAF 1">
    <location>
        <begin position="75"/>
        <end position="224"/>
    </location>
</feature>
<feature type="domain" description="GAF 2">
    <location>
        <begin position="256"/>
        <end position="433"/>
    </location>
</feature>
<feature type="domain" description="PDEase" evidence="4">
    <location>
        <begin position="486"/>
        <end position="819"/>
    </location>
</feature>
<feature type="region of interest" description="Disordered" evidence="5">
    <location>
        <begin position="826"/>
        <end position="861"/>
    </location>
</feature>
<feature type="compositionally biased region" description="Basic and acidic residues" evidence="5">
    <location>
        <begin position="826"/>
        <end position="839"/>
    </location>
</feature>
<feature type="active site" description="Proton donor" evidence="1">
    <location>
        <position position="562"/>
    </location>
</feature>
<feature type="binding site" evidence="1">
    <location>
        <position position="97"/>
    </location>
    <ligand>
        <name>3',5'-cyclic GMP</name>
        <dbReference type="ChEBI" id="CHEBI:57746"/>
    </ligand>
</feature>
<feature type="binding site" evidence="1">
    <location>
        <position position="116"/>
    </location>
    <ligand>
        <name>3',5'-cyclic GMP</name>
        <dbReference type="ChEBI" id="CHEBI:57746"/>
    </ligand>
</feature>
<feature type="binding site" evidence="1">
    <location>
        <begin position="169"/>
        <end position="172"/>
    </location>
    <ligand>
        <name>3',5'-cyclic GMP</name>
        <dbReference type="ChEBI" id="CHEBI:57746"/>
    </ligand>
</feature>
<feature type="binding site" evidence="1">
    <location>
        <position position="176"/>
    </location>
    <ligand>
        <name>3',5'-cyclic GMP</name>
        <dbReference type="ChEBI" id="CHEBI:57746"/>
    </ligand>
</feature>
<feature type="binding site" evidence="1">
    <location>
        <position position="566"/>
    </location>
    <ligand>
        <name>a divalent metal cation</name>
        <dbReference type="ChEBI" id="CHEBI:60240"/>
        <label>1</label>
    </ligand>
</feature>
<feature type="binding site" evidence="1">
    <location>
        <position position="602"/>
    </location>
    <ligand>
        <name>a divalent metal cation</name>
        <dbReference type="ChEBI" id="CHEBI:60240"/>
        <label>1</label>
    </ligand>
</feature>
<feature type="binding site" evidence="1">
    <location>
        <position position="603"/>
    </location>
    <ligand>
        <name>a divalent metal cation</name>
        <dbReference type="ChEBI" id="CHEBI:60240"/>
        <label>1</label>
    </ligand>
</feature>
<feature type="binding site" evidence="1">
    <location>
        <position position="603"/>
    </location>
    <ligand>
        <name>a divalent metal cation</name>
        <dbReference type="ChEBI" id="CHEBI:60240"/>
        <label>2</label>
    </ligand>
</feature>
<feature type="binding site" evidence="1">
    <location>
        <position position="723"/>
    </location>
    <ligand>
        <name>a divalent metal cation</name>
        <dbReference type="ChEBI" id="CHEBI:60240"/>
        <label>1</label>
    </ligand>
</feature>
<feature type="modified residue" description="Cysteine methyl ester" evidence="3">
    <location>
        <position position="858"/>
    </location>
</feature>
<feature type="lipid moiety-binding region" description="S-geranylgeranyl cysteine" evidence="1">
    <location>
        <position position="858"/>
    </location>
</feature>
<feature type="splice variant" id="VSP_017422" description="In isoform 2." evidence="6">
    <location>
        <begin position="737"/>
        <end position="761"/>
    </location>
</feature>
<sequence>MGEISQEAVERYLEKNPCFAKEYFDKKLRVEALGVIFKNSHAGVQTGLSLPEMTQVEESAVCLELLQCMQDEAGSAEQMAHRALQRLAQLLQADCCSMFSCRARNGIPEVASRLLNVTPTSKFEDNLVAPDREVVFPLDIGIVGWVAHVKKALNVSDVKKNSHFSDFMDKQTGYVTRNLLAVPIVAGKEVLAVVMAVNKISAPEFSKQDEEVFSKYLSFVAVALRLQHTSYLYSVESRRSQILMWSANKVFEELTDVERQFHKALYTIRTYLNCDRYSIGLLDMTKEKEFYDEWPIKLGEVEPYKGPKTPDGREIIFYKIIDYILHGKEEINVIPSPPADHWTLVSGLPTYVAENGFICNMLNAPADEYFTFQKGPVDETGWVIKNVLSLPIVNKKEDIVGVATFYNRKDGKPFDEHDEHITETLTQFLGWSLLNTDTYERVNKLESRKDIAQEMVMNLTKATPDEISSILKFKEKLNVEVIEECEERQLLAILKEDLPDPRTADLYEFCFSDFPITEHELVKCGLRLFLEINVVEKFKVPVEVLTRWMYTVRKGYRPVTYHNWRHGFNVGQTMFTLLMTGRLKKYYTDLEAFAMLAAAFCHDIDHRGTNNLYQMKSTSPLARLHGTSILERHHLEYSKTLLQDESLNIFQNLNKRQFETVIHLFEVAIIATDLALYFKKRTMFQKIVDTCEQMQSEEETIKYVTSDPTKKEVIMAMMMTACDLSAITKPWEVQSQVALLVANEFWEQGDLERTVLQQQPIPMMDRSKKDELPKLQVGFIDFVCTFVYKEFSRFHGEITPMLNGLQNNRVEWKSLAEEYEAKVKVTEEEAGKQEEEASDGKAATDLGGSAEDKKSKTCLML</sequence>
<name>PDE6C_MOUSE</name>
<accession>Q91ZQ1</accession>
<accession>Q8R0D4</accession>
<keyword id="KW-0025">Alternative splicing</keyword>
<keyword id="KW-1003">Cell membrane</keyword>
<keyword id="KW-0140">cGMP</keyword>
<keyword id="KW-0142">cGMP-binding</keyword>
<keyword id="KW-0378">Hydrolase</keyword>
<keyword id="KW-0449">Lipoprotein</keyword>
<keyword id="KW-0472">Membrane</keyword>
<keyword id="KW-0479">Metal-binding</keyword>
<keyword id="KW-0488">Methylation</keyword>
<keyword id="KW-0547">Nucleotide-binding</keyword>
<keyword id="KW-0636">Prenylation</keyword>
<keyword id="KW-1185">Reference proteome</keyword>
<keyword id="KW-0677">Repeat</keyword>
<keyword id="KW-0716">Sensory transduction</keyword>
<keyword id="KW-0844">Vision</keyword>
<proteinExistence type="evidence at transcript level"/>
<protein>
    <recommendedName>
        <fullName>Cone cGMP-specific 3',5'-cyclic phosphodiesterase subunit alpha'</fullName>
        <ecNumber evidence="2">3.1.4.35</ecNumber>
    </recommendedName>
    <alternativeName>
        <fullName>cGMP phosphodiesterase 6C</fullName>
    </alternativeName>
</protein>
<reference key="1">
    <citation type="submission" date="2001-08" db="EMBL/GenBank/DDBJ databases">
        <title>A sequence alteration in Pde6c gene causes cone photoreceptor function loss (cpfl1) in mice.</title>
        <authorList>
            <person name="Chang B."/>
            <person name="Hawes N.L."/>
            <person name="Hurd R.E."/>
            <person name="Davisson M.T."/>
            <person name="Nusinowitz S."/>
            <person name="Heckenlively J.R."/>
        </authorList>
    </citation>
    <scope>NUCLEOTIDE SEQUENCE [MRNA] (ISOFORM 1)</scope>
    <source>
        <strain>C57BL/6J</strain>
        <tissue>Retina</tissue>
    </source>
</reference>
<reference key="2">
    <citation type="journal article" date="2004" name="Genome Res.">
        <title>The status, quality, and expansion of the NIH full-length cDNA project: the Mammalian Gene Collection (MGC).</title>
        <authorList>
            <consortium name="The MGC Project Team"/>
        </authorList>
    </citation>
    <scope>NUCLEOTIDE SEQUENCE [LARGE SCALE MRNA] (ISOFORM 2)</scope>
    <source>
        <tissue>Eye</tissue>
    </source>
</reference>
<dbReference type="EC" id="3.1.4.35" evidence="2"/>
<dbReference type="EMBL" id="AF411063">
    <property type="protein sequence ID" value="AAK96254.1"/>
    <property type="molecule type" value="mRNA"/>
</dbReference>
<dbReference type="EMBL" id="BC027050">
    <property type="protein sequence ID" value="AAH27050.1"/>
    <property type="molecule type" value="mRNA"/>
</dbReference>
<dbReference type="CCDS" id="CCDS37971.1">
    <molecule id="Q91ZQ1-1"/>
</dbReference>
<dbReference type="CCDS" id="CCDS50431.1">
    <molecule id="Q91ZQ1-2"/>
</dbReference>
<dbReference type="RefSeq" id="NP_001164430.1">
    <molecule id="Q91ZQ1-2"/>
    <property type="nucleotide sequence ID" value="NM_001170959.2"/>
</dbReference>
<dbReference type="RefSeq" id="NP_291092.1">
    <molecule id="Q91ZQ1-1"/>
    <property type="nucleotide sequence ID" value="NM_033614.3"/>
</dbReference>
<dbReference type="SMR" id="Q91ZQ1"/>
<dbReference type="BioGRID" id="225961">
    <property type="interactions" value="5"/>
</dbReference>
<dbReference type="CORUM" id="Q91ZQ1"/>
<dbReference type="FunCoup" id="Q91ZQ1">
    <property type="interactions" value="129"/>
</dbReference>
<dbReference type="STRING" id="10090.ENSMUSP00000025956"/>
<dbReference type="GlyGen" id="Q91ZQ1">
    <property type="glycosylation" value="1 site, 1 N-linked glycan (1 site)"/>
</dbReference>
<dbReference type="iPTMnet" id="Q91ZQ1"/>
<dbReference type="PhosphoSitePlus" id="Q91ZQ1"/>
<dbReference type="PaxDb" id="10090-ENSMUSP00000025956"/>
<dbReference type="ProteomicsDB" id="287989">
    <molecule id="Q91ZQ1-1"/>
</dbReference>
<dbReference type="ProteomicsDB" id="287990">
    <molecule id="Q91ZQ1-2"/>
</dbReference>
<dbReference type="Antibodypedia" id="30485">
    <property type="antibodies" value="128 antibodies from 22 providers"/>
</dbReference>
<dbReference type="DNASU" id="110855"/>
<dbReference type="Ensembl" id="ENSMUST00000025956.13">
    <molecule id="Q91ZQ1-1"/>
    <property type="protein sequence ID" value="ENSMUSP00000025956.6"/>
    <property type="gene ID" value="ENSMUSG00000024992.14"/>
</dbReference>
<dbReference type="Ensembl" id="ENSMUST00000112329.3">
    <molecule id="Q91ZQ1-2"/>
    <property type="protein sequence ID" value="ENSMUSP00000107948.2"/>
    <property type="gene ID" value="ENSMUSG00000024992.14"/>
</dbReference>
<dbReference type="GeneID" id="110855"/>
<dbReference type="KEGG" id="mmu:110855"/>
<dbReference type="UCSC" id="uc008hjf.2">
    <molecule id="Q91ZQ1-1"/>
    <property type="organism name" value="mouse"/>
</dbReference>
<dbReference type="UCSC" id="uc012blg.1">
    <molecule id="Q91ZQ1-2"/>
    <property type="organism name" value="mouse"/>
</dbReference>
<dbReference type="AGR" id="MGI:105956"/>
<dbReference type="CTD" id="5146"/>
<dbReference type="MGI" id="MGI:105956">
    <property type="gene designation" value="Pde6c"/>
</dbReference>
<dbReference type="VEuPathDB" id="HostDB:ENSMUSG00000024992"/>
<dbReference type="eggNOG" id="KOG3689">
    <property type="taxonomic scope" value="Eukaryota"/>
</dbReference>
<dbReference type="GeneTree" id="ENSGT00940000157825"/>
<dbReference type="HOGENOM" id="CLU_006980_2_0_1"/>
<dbReference type="InParanoid" id="Q91ZQ1"/>
<dbReference type="OMA" id="LICNMMN"/>
<dbReference type="OrthoDB" id="546632at2759"/>
<dbReference type="PhylomeDB" id="Q91ZQ1"/>
<dbReference type="TreeFam" id="TF316499"/>
<dbReference type="BioGRID-ORCS" id="110855">
    <property type="hits" value="1 hit in 77 CRISPR screens"/>
</dbReference>
<dbReference type="ChiTaRS" id="Pde6c">
    <property type="organism name" value="mouse"/>
</dbReference>
<dbReference type="PRO" id="PR:Q91ZQ1"/>
<dbReference type="Proteomes" id="UP000000589">
    <property type="component" value="Chromosome 19"/>
</dbReference>
<dbReference type="RNAct" id="Q91ZQ1">
    <property type="molecule type" value="protein"/>
</dbReference>
<dbReference type="Bgee" id="ENSMUSG00000024992">
    <property type="expression patterns" value="Expressed in retinal neural layer and 26 other cell types or tissues"/>
</dbReference>
<dbReference type="GO" id="GO:0005886">
    <property type="term" value="C:plasma membrane"/>
    <property type="evidence" value="ECO:0007669"/>
    <property type="project" value="UniProtKB-SubCell"/>
</dbReference>
<dbReference type="GO" id="GO:0047555">
    <property type="term" value="F:3',5'-cyclic-GMP phosphodiesterase activity"/>
    <property type="evidence" value="ECO:0007669"/>
    <property type="project" value="UniProtKB-EC"/>
</dbReference>
<dbReference type="GO" id="GO:0030553">
    <property type="term" value="F:cGMP binding"/>
    <property type="evidence" value="ECO:0007669"/>
    <property type="project" value="UniProtKB-KW"/>
</dbReference>
<dbReference type="GO" id="GO:0046872">
    <property type="term" value="F:metal ion binding"/>
    <property type="evidence" value="ECO:0007669"/>
    <property type="project" value="UniProtKB-KW"/>
</dbReference>
<dbReference type="GO" id="GO:0007603">
    <property type="term" value="P:phototransduction, visible light"/>
    <property type="evidence" value="ECO:0000315"/>
    <property type="project" value="MGI"/>
</dbReference>
<dbReference type="GO" id="GO:0046549">
    <property type="term" value="P:retinal cone cell development"/>
    <property type="evidence" value="ECO:0000315"/>
    <property type="project" value="MGI"/>
</dbReference>
<dbReference type="GO" id="GO:0050953">
    <property type="term" value="P:sensory perception of light stimulus"/>
    <property type="evidence" value="ECO:0000315"/>
    <property type="project" value="MGI"/>
</dbReference>
<dbReference type="GO" id="GO:0007601">
    <property type="term" value="P:visual perception"/>
    <property type="evidence" value="ECO:0000315"/>
    <property type="project" value="MGI"/>
</dbReference>
<dbReference type="CDD" id="cd00077">
    <property type="entry name" value="HDc"/>
    <property type="match status" value="1"/>
</dbReference>
<dbReference type="FunFam" id="1.10.1300.10:FF:000005">
    <property type="entry name" value="Phosphodiesterase"/>
    <property type="match status" value="1"/>
</dbReference>
<dbReference type="FunFam" id="3.30.450.40:FF:000001">
    <property type="entry name" value="Phosphodiesterase"/>
    <property type="match status" value="1"/>
</dbReference>
<dbReference type="FunFam" id="3.30.450.40:FF:000010">
    <property type="entry name" value="Phosphodiesterase"/>
    <property type="match status" value="1"/>
</dbReference>
<dbReference type="Gene3D" id="3.30.450.40">
    <property type="match status" value="2"/>
</dbReference>
<dbReference type="Gene3D" id="1.10.1300.10">
    <property type="entry name" value="3'5'-cyclic nucleotide phosphodiesterase, catalytic domain"/>
    <property type="match status" value="1"/>
</dbReference>
<dbReference type="InterPro" id="IPR003018">
    <property type="entry name" value="GAF"/>
</dbReference>
<dbReference type="InterPro" id="IPR029016">
    <property type="entry name" value="GAF-like_dom_sf"/>
</dbReference>
<dbReference type="InterPro" id="IPR003607">
    <property type="entry name" value="HD/PDEase_dom"/>
</dbReference>
<dbReference type="InterPro" id="IPR023088">
    <property type="entry name" value="PDEase"/>
</dbReference>
<dbReference type="InterPro" id="IPR002073">
    <property type="entry name" value="PDEase_catalytic_dom"/>
</dbReference>
<dbReference type="InterPro" id="IPR036971">
    <property type="entry name" value="PDEase_catalytic_dom_sf"/>
</dbReference>
<dbReference type="InterPro" id="IPR023174">
    <property type="entry name" value="PDEase_CS"/>
</dbReference>
<dbReference type="PANTHER" id="PTHR11347">
    <property type="entry name" value="CYCLIC NUCLEOTIDE PHOSPHODIESTERASE"/>
    <property type="match status" value="1"/>
</dbReference>
<dbReference type="Pfam" id="PF01590">
    <property type="entry name" value="GAF"/>
    <property type="match status" value="2"/>
</dbReference>
<dbReference type="Pfam" id="PF00233">
    <property type="entry name" value="PDEase_I"/>
    <property type="match status" value="1"/>
</dbReference>
<dbReference type="PRINTS" id="PR00387">
    <property type="entry name" value="PDIESTERASE1"/>
</dbReference>
<dbReference type="SMART" id="SM00065">
    <property type="entry name" value="GAF"/>
    <property type="match status" value="2"/>
</dbReference>
<dbReference type="SMART" id="SM00471">
    <property type="entry name" value="HDc"/>
    <property type="match status" value="1"/>
</dbReference>
<dbReference type="SUPFAM" id="SSF55781">
    <property type="entry name" value="GAF domain-like"/>
    <property type="match status" value="2"/>
</dbReference>
<dbReference type="SUPFAM" id="SSF109604">
    <property type="entry name" value="HD-domain/PDEase-like"/>
    <property type="match status" value="1"/>
</dbReference>
<dbReference type="PROSITE" id="PS00126">
    <property type="entry name" value="PDEASE_I_1"/>
    <property type="match status" value="1"/>
</dbReference>
<dbReference type="PROSITE" id="PS51845">
    <property type="entry name" value="PDEASE_I_2"/>
    <property type="match status" value="1"/>
</dbReference>
<gene>
    <name type="primary">Pde6c</name>
</gene>
<evidence type="ECO:0000250" key="1"/>
<evidence type="ECO:0000250" key="2">
    <source>
        <dbReference type="UniProtKB" id="P51160"/>
    </source>
</evidence>
<evidence type="ECO:0000255" key="3"/>
<evidence type="ECO:0000255" key="4">
    <source>
        <dbReference type="PROSITE-ProRule" id="PRU01192"/>
    </source>
</evidence>
<evidence type="ECO:0000256" key="5">
    <source>
        <dbReference type="SAM" id="MobiDB-lite"/>
    </source>
</evidence>
<evidence type="ECO:0000303" key="6">
    <source>
    </source>
</evidence>
<evidence type="ECO:0000305" key="7"/>